<gene>
    <name evidence="6 7" type="primary">NIT1</name>
    <name evidence="9" type="ordered locus">At3g44310</name>
    <name evidence="10" type="ORF">T10D17_100</name>
</gene>
<comment type="function">
    <text>Can convert indole-3-acetonitrile to the plant hormone indole-3-acetic acid.</text>
</comment>
<comment type="catalytic activity">
    <reaction evidence="3">
        <text>a nitrile + 2 H2O = a carboxylate + NH4(+)</text>
        <dbReference type="Rhea" id="RHEA:21724"/>
        <dbReference type="ChEBI" id="CHEBI:15377"/>
        <dbReference type="ChEBI" id="CHEBI:18379"/>
        <dbReference type="ChEBI" id="CHEBI:28938"/>
        <dbReference type="ChEBI" id="CHEBI:29067"/>
        <dbReference type="EC" id="3.5.5.1"/>
    </reaction>
</comment>
<comment type="subunit">
    <text evidence="4">Interacts with DEK3.</text>
</comment>
<comment type="alternative products">
    <event type="alternative splicing"/>
    <isoform>
        <id>P32961-1</id>
        <name>1</name>
        <sequence type="displayed"/>
    </isoform>
    <isoform>
        <id>P32961-2</id>
        <name>2</name>
        <sequence type="described" ref="VSP_059335"/>
    </isoform>
</comment>
<comment type="tissue specificity">
    <text evidence="5">Expressed in cotyledons, hypocotyls, leaves, roots, stems, flowers and siliques.</text>
</comment>
<comment type="developmental stage">
    <text>Expressed throughout development, but at a very low level during the fruiting stage.</text>
</comment>
<comment type="miscellaneous">
    <molecule>Isoform 2</molecule>
    <text evidence="8">Produced by alternative initiation at Met-7 of isoform 1.</text>
</comment>
<comment type="similarity">
    <text evidence="8">Belongs to the carbon-nitrogen hydrolase superfamily. Nitrilase family.</text>
</comment>
<accession>P32961</accession>
<accession>O04908</accession>
<accession>Q42543</accession>
<accession>Q53YI1</accession>
<accession>Q94B53</accession>
<reference key="1">
    <citation type="journal article" date="1992" name="Eur. J. Biochem.">
        <title>Cloning and expression of an Arabidopsis nitrilase which can convert indole-3-acetonitrile to the plant hormone, indole-3-acetic acid.</title>
        <authorList>
            <person name="Bartling D."/>
            <person name="Seedorf M."/>
            <person name="Mithoefer A."/>
            <person name="Weiler E.W."/>
        </authorList>
    </citation>
    <scope>NUCLEOTIDE SEQUENCE [MRNA]</scope>
    <scope>CHARACTERIZATION</scope>
    <source>
        <strain>cv. Landsberg erecta</strain>
        <tissue>Leaf</tissue>
    </source>
</reference>
<reference key="2">
    <citation type="journal article" date="1994" name="Proc. Natl. Acad. Sci. U.S.A.">
        <title>Differential regulation of an auxin-producing nitrilase gene family in Arabidopsis thaliana.</title>
        <authorList>
            <person name="Bartel B."/>
            <person name="Fink G.R."/>
        </authorList>
    </citation>
    <scope>NUCLEOTIDE SEQUENCE [GENOMIC DNA]</scope>
    <scope>TISSUE SPECIFICITY</scope>
</reference>
<reference key="3">
    <citation type="online journal article" date="1995" name="Plant Gene Register">
        <title>Nucleotide sequence of the Arabidopsis thaliana nitrilase 1 gene.</title>
        <authorList>
            <person name="Zhou L."/>
            <person name="Bartel B."/>
            <person name="Thornburg R.W."/>
        </authorList>
        <locator>PGR95-130</locator>
    </citation>
    <scope>NUCLEOTIDE SEQUENCE [GENOMIC DNA]</scope>
    <source>
        <strain>cv. Columbia</strain>
    </source>
</reference>
<reference key="4">
    <citation type="journal article" date="1998" name="Plant Mol. Biol.">
        <title>Structural analysis of the nit2/nit1/nit3 gene cluster encoding nitrilases, enzymes catalyzing the terminal activation step in indole-acetic acid biosynthesis in Arabidopsis thaliana.</title>
        <authorList>
            <person name="Hillebrand H."/>
            <person name="Bartling D."/>
            <person name="Weiler E.W."/>
        </authorList>
    </citation>
    <scope>NUCLEOTIDE SEQUENCE [GENOMIC DNA]</scope>
</reference>
<reference key="5">
    <citation type="journal article" date="2000" name="Nature">
        <title>Sequence and analysis of chromosome 3 of the plant Arabidopsis thaliana.</title>
        <authorList>
            <person name="Salanoubat M."/>
            <person name="Lemcke K."/>
            <person name="Rieger M."/>
            <person name="Ansorge W."/>
            <person name="Unseld M."/>
            <person name="Fartmann B."/>
            <person name="Valle G."/>
            <person name="Bloecker H."/>
            <person name="Perez-Alonso M."/>
            <person name="Obermaier B."/>
            <person name="Delseny M."/>
            <person name="Boutry M."/>
            <person name="Grivell L.A."/>
            <person name="Mache R."/>
            <person name="Puigdomenech P."/>
            <person name="De Simone V."/>
            <person name="Choisne N."/>
            <person name="Artiguenave F."/>
            <person name="Robert C."/>
            <person name="Brottier P."/>
            <person name="Wincker P."/>
            <person name="Cattolico L."/>
            <person name="Weissenbach J."/>
            <person name="Saurin W."/>
            <person name="Quetier F."/>
            <person name="Schaefer M."/>
            <person name="Mueller-Auer S."/>
            <person name="Gabel C."/>
            <person name="Fuchs M."/>
            <person name="Benes V."/>
            <person name="Wurmbach E."/>
            <person name="Drzonek H."/>
            <person name="Erfle H."/>
            <person name="Jordan N."/>
            <person name="Bangert S."/>
            <person name="Wiedelmann R."/>
            <person name="Kranz H."/>
            <person name="Voss H."/>
            <person name="Holland R."/>
            <person name="Brandt P."/>
            <person name="Nyakatura G."/>
            <person name="Vezzi A."/>
            <person name="D'Angelo M."/>
            <person name="Pallavicini A."/>
            <person name="Toppo S."/>
            <person name="Simionati B."/>
            <person name="Conrad A."/>
            <person name="Hornischer K."/>
            <person name="Kauer G."/>
            <person name="Loehnert T.-H."/>
            <person name="Nordsiek G."/>
            <person name="Reichelt J."/>
            <person name="Scharfe M."/>
            <person name="Schoen O."/>
            <person name="Bargues M."/>
            <person name="Terol J."/>
            <person name="Climent J."/>
            <person name="Navarro P."/>
            <person name="Collado C."/>
            <person name="Perez-Perez A."/>
            <person name="Ottenwaelder B."/>
            <person name="Duchemin D."/>
            <person name="Cooke R."/>
            <person name="Laudie M."/>
            <person name="Berger-Llauro C."/>
            <person name="Purnelle B."/>
            <person name="Masuy D."/>
            <person name="de Haan M."/>
            <person name="Maarse A.C."/>
            <person name="Alcaraz J.-P."/>
            <person name="Cottet A."/>
            <person name="Casacuberta E."/>
            <person name="Monfort A."/>
            <person name="Argiriou A."/>
            <person name="Flores M."/>
            <person name="Liguori R."/>
            <person name="Vitale D."/>
            <person name="Mannhaupt G."/>
            <person name="Haase D."/>
            <person name="Schoof H."/>
            <person name="Rudd S."/>
            <person name="Zaccaria P."/>
            <person name="Mewes H.-W."/>
            <person name="Mayer K.F.X."/>
            <person name="Kaul S."/>
            <person name="Town C.D."/>
            <person name="Koo H.L."/>
            <person name="Tallon L.J."/>
            <person name="Jenkins J."/>
            <person name="Rooney T."/>
            <person name="Rizzo M."/>
            <person name="Walts A."/>
            <person name="Utterback T."/>
            <person name="Fujii C.Y."/>
            <person name="Shea T.P."/>
            <person name="Creasy T.H."/>
            <person name="Haas B."/>
            <person name="Maiti R."/>
            <person name="Wu D."/>
            <person name="Peterson J."/>
            <person name="Van Aken S."/>
            <person name="Pai G."/>
            <person name="Militscher J."/>
            <person name="Sellers P."/>
            <person name="Gill J.E."/>
            <person name="Feldblyum T.V."/>
            <person name="Preuss D."/>
            <person name="Lin X."/>
            <person name="Nierman W.C."/>
            <person name="Salzberg S.L."/>
            <person name="White O."/>
            <person name="Venter J.C."/>
            <person name="Fraser C.M."/>
            <person name="Kaneko T."/>
            <person name="Nakamura Y."/>
            <person name="Sato S."/>
            <person name="Kato T."/>
            <person name="Asamizu E."/>
            <person name="Sasamoto S."/>
            <person name="Kimura T."/>
            <person name="Idesawa K."/>
            <person name="Kawashima K."/>
            <person name="Kishida Y."/>
            <person name="Kiyokawa C."/>
            <person name="Kohara M."/>
            <person name="Matsumoto M."/>
            <person name="Matsuno A."/>
            <person name="Muraki A."/>
            <person name="Nakayama S."/>
            <person name="Nakazaki N."/>
            <person name="Shinpo S."/>
            <person name="Takeuchi C."/>
            <person name="Wada T."/>
            <person name="Watanabe A."/>
            <person name="Yamada M."/>
            <person name="Yasuda M."/>
            <person name="Tabata S."/>
        </authorList>
    </citation>
    <scope>NUCLEOTIDE SEQUENCE [LARGE SCALE GENOMIC DNA]</scope>
    <source>
        <strain>cv. Columbia</strain>
    </source>
</reference>
<reference key="6">
    <citation type="journal article" date="2017" name="Plant J.">
        <title>Araport11: a complete reannotation of the Arabidopsis thaliana reference genome.</title>
        <authorList>
            <person name="Cheng C.Y."/>
            <person name="Krishnakumar V."/>
            <person name="Chan A.P."/>
            <person name="Thibaud-Nissen F."/>
            <person name="Schobel S."/>
            <person name="Town C.D."/>
        </authorList>
    </citation>
    <scope>GENOME REANNOTATION</scope>
    <source>
        <strain>cv. Columbia</strain>
    </source>
</reference>
<reference key="7">
    <citation type="journal article" date="2003" name="Science">
        <title>Empirical analysis of transcriptional activity in the Arabidopsis genome.</title>
        <authorList>
            <person name="Yamada K."/>
            <person name="Lim J."/>
            <person name="Dale J.M."/>
            <person name="Chen H."/>
            <person name="Shinn P."/>
            <person name="Palm C.J."/>
            <person name="Southwick A.M."/>
            <person name="Wu H.C."/>
            <person name="Kim C.J."/>
            <person name="Nguyen M."/>
            <person name="Pham P.K."/>
            <person name="Cheuk R.F."/>
            <person name="Karlin-Newmann G."/>
            <person name="Liu S.X."/>
            <person name="Lam B."/>
            <person name="Sakano H."/>
            <person name="Wu T."/>
            <person name="Yu G."/>
            <person name="Miranda M."/>
            <person name="Quach H.L."/>
            <person name="Tripp M."/>
            <person name="Chang C.H."/>
            <person name="Lee J.M."/>
            <person name="Toriumi M.J."/>
            <person name="Chan M.M."/>
            <person name="Tang C.C."/>
            <person name="Onodera C.S."/>
            <person name="Deng J.M."/>
            <person name="Akiyama K."/>
            <person name="Ansari Y."/>
            <person name="Arakawa T."/>
            <person name="Banh J."/>
            <person name="Banno F."/>
            <person name="Bowser L."/>
            <person name="Brooks S.Y."/>
            <person name="Carninci P."/>
            <person name="Chao Q."/>
            <person name="Choy N."/>
            <person name="Enju A."/>
            <person name="Goldsmith A.D."/>
            <person name="Gurjal M."/>
            <person name="Hansen N.F."/>
            <person name="Hayashizaki Y."/>
            <person name="Johnson-Hopson C."/>
            <person name="Hsuan V.W."/>
            <person name="Iida K."/>
            <person name="Karnes M."/>
            <person name="Khan S."/>
            <person name="Koesema E."/>
            <person name="Ishida J."/>
            <person name="Jiang P.X."/>
            <person name="Jones T."/>
            <person name="Kawai J."/>
            <person name="Kamiya A."/>
            <person name="Meyers C."/>
            <person name="Nakajima M."/>
            <person name="Narusaka M."/>
            <person name="Seki M."/>
            <person name="Sakurai T."/>
            <person name="Satou M."/>
            <person name="Tamse R."/>
            <person name="Vaysberg M."/>
            <person name="Wallender E.K."/>
            <person name="Wong C."/>
            <person name="Yamamura Y."/>
            <person name="Yuan S."/>
            <person name="Shinozaki K."/>
            <person name="Davis R.W."/>
            <person name="Theologis A."/>
            <person name="Ecker J.R."/>
        </authorList>
    </citation>
    <scope>NUCLEOTIDE SEQUENCE [LARGE SCALE MRNA]</scope>
    <source>
        <strain>cv. Columbia</strain>
    </source>
</reference>
<reference key="8">
    <citation type="journal article" date="2006" name="Plant Biotechnol. J.">
        <title>Simultaneous high-throughput recombinational cloning of open reading frames in closed and open configurations.</title>
        <authorList>
            <person name="Underwood B.A."/>
            <person name="Vanderhaeghen R."/>
            <person name="Whitford R."/>
            <person name="Town C.D."/>
            <person name="Hilson P."/>
        </authorList>
    </citation>
    <scope>NUCLEOTIDE SEQUENCE [LARGE SCALE MRNA]</scope>
    <source>
        <strain>cv. Columbia</strain>
    </source>
</reference>
<reference key="9">
    <citation type="journal article" date="1994" name="Proc. Natl. Acad. Sci. U.S.A.">
        <title>Molecular characterization of two cloned nitrilases from Arabidopsis thaliana: key enzymes in biosynthesis of the plant hormone indole-3-acetic acid.</title>
        <authorList>
            <person name="Bartling D."/>
            <person name="Seedorf M."/>
            <person name="Schmidt R.C."/>
            <person name="Weiler E.W."/>
        </authorList>
    </citation>
    <scope>CHARACTERIZATION</scope>
    <source>
        <strain>cv. Landsberg erecta</strain>
    </source>
</reference>
<reference key="10">
    <citation type="journal article" date="2007" name="Mol. Cell. Proteomics">
        <title>Multidimensional protein identification technology (MudPIT) analysis of ubiquitinated proteins in plants.</title>
        <authorList>
            <person name="Maor R."/>
            <person name="Jones A."/>
            <person name="Nuehse T.S."/>
            <person name="Studholme D.J."/>
            <person name="Peck S.C."/>
            <person name="Shirasu K."/>
        </authorList>
    </citation>
    <scope>IDENTIFICATION BY MASS SPECTROMETRY [LARGE SCALE ANALYSIS]</scope>
    <source>
        <strain>cv. Landsberg erecta</strain>
    </source>
</reference>
<reference key="11">
    <citation type="journal article" date="2012" name="Mol. Cell. Proteomics">
        <title>Comparative large-scale characterisation of plant vs. mammal proteins reveals similar and idiosyncratic N-alpha acetylation features.</title>
        <authorList>
            <person name="Bienvenut W.V."/>
            <person name="Sumpton D."/>
            <person name="Martinez A."/>
            <person name="Lilla S."/>
            <person name="Espagne C."/>
            <person name="Meinnel T."/>
            <person name="Giglione C."/>
        </authorList>
    </citation>
    <scope>ACETYLATION [LARGE SCALE ANALYSIS] AT SER-2 (ISOFORM 2)</scope>
    <scope>CLEAVAGE OF INITIATOR METHIONINE [LARGE SCALE ANALYSIS] (ISOFORM 2)</scope>
    <scope>IDENTIFICATION BY MASS SPECTROMETRY [LARGE SCALE ANALYSIS]</scope>
</reference>
<reference key="12">
    <citation type="journal article" date="2014" name="Plant Cell">
        <title>A DEK domain-containing protein modulates chromatin structure and function in Arabidopsis.</title>
        <authorList>
            <person name="Waidmann S."/>
            <person name="Kusenda B."/>
            <person name="Mayerhofer J."/>
            <person name="Mechtler K."/>
            <person name="Jonak C."/>
        </authorList>
    </citation>
    <scope>INTERACTION WITH DEK3</scope>
    <scope>IDENTIFICATION BY MASS SPECTROMETRY</scope>
    <source>
        <strain>cv. Columbia</strain>
    </source>
</reference>
<organism>
    <name type="scientific">Arabidopsis thaliana</name>
    <name type="common">Mouse-ear cress</name>
    <dbReference type="NCBI Taxonomy" id="3702"/>
    <lineage>
        <taxon>Eukaryota</taxon>
        <taxon>Viridiplantae</taxon>
        <taxon>Streptophyta</taxon>
        <taxon>Embryophyta</taxon>
        <taxon>Tracheophyta</taxon>
        <taxon>Spermatophyta</taxon>
        <taxon>Magnoliopsida</taxon>
        <taxon>eudicotyledons</taxon>
        <taxon>Gunneridae</taxon>
        <taxon>Pentapetalae</taxon>
        <taxon>rosids</taxon>
        <taxon>malvids</taxon>
        <taxon>Brassicales</taxon>
        <taxon>Brassicaceae</taxon>
        <taxon>Camelineae</taxon>
        <taxon>Arabidopsis</taxon>
    </lineage>
</organism>
<name>NRL1_ARATH</name>
<protein>
    <recommendedName>
        <fullName evidence="6 7">Nitrilase 1</fullName>
        <ecNumber evidence="3">3.5.5.1</ecNumber>
    </recommendedName>
</protein>
<keyword id="KW-0007">Acetylation</keyword>
<keyword id="KW-0025">Alternative splicing</keyword>
<keyword id="KW-0378">Hydrolase</keyword>
<keyword id="KW-1185">Reference proteome</keyword>
<sequence length="346" mass="38152">MSSTKDMSTVQNATPFNGVAPSTTVRVTIVQSSTVYNDTPATIDKAEKYIVEAASKGAELVLFPEGFIGGYPRGFRFGLAVGVHNEEGRDEFRKYHASAIHVPGPEVARLADVARKNHVYLVMGAIEKEGYTLYCTVLFFSPQGQFLGKHRKLMPTSLERCIWGQGDGSTIPVYDTPIGKLGAAICWENRMPLYRTALYAKGIELYCAPTADGSKEWQSSMLHIAIEGGCFVLSACQFCQRKHFPDHPDYLFTDWYDDKEHDSIVSQGGSVIISPLGQVLAGPNFESEGLVTADIDLGDIARAKLYFDSVGHYSRPDVLHLTVNEHPRKSVTFVTKVEKAEDDSNK</sequence>
<proteinExistence type="evidence at protein level"/>
<evidence type="ECO:0000250" key="1">
    <source>
        <dbReference type="UniProtKB" id="P32962"/>
    </source>
</evidence>
<evidence type="ECO:0000255" key="2">
    <source>
        <dbReference type="PROSITE-ProRule" id="PRU00054"/>
    </source>
</evidence>
<evidence type="ECO:0000255" key="3">
    <source>
        <dbReference type="PROSITE-ProRule" id="PRU10105"/>
    </source>
</evidence>
<evidence type="ECO:0000269" key="4">
    <source>
    </source>
</evidence>
<evidence type="ECO:0000269" key="5">
    <source>
    </source>
</evidence>
<evidence type="ECO:0000303" key="6">
    <source>
    </source>
</evidence>
<evidence type="ECO:0000303" key="7">
    <source ref="3"/>
</evidence>
<evidence type="ECO:0000305" key="8"/>
<evidence type="ECO:0000312" key="9">
    <source>
        <dbReference type="Araport" id="AT3G44310"/>
    </source>
</evidence>
<evidence type="ECO:0000312" key="10">
    <source>
        <dbReference type="EMBL" id="CAB88999.1"/>
    </source>
</evidence>
<evidence type="ECO:0007744" key="11">
    <source>
    </source>
</evidence>
<feature type="initiator methionine" description="Removed" evidence="1">
    <location>
        <position position="1"/>
    </location>
</feature>
<feature type="chain" id="PRO_0000204036" description="Nitrilase 1">
    <location>
        <begin position="2"/>
        <end position="346"/>
    </location>
</feature>
<feature type="domain" description="CN hydrolase" evidence="2">
    <location>
        <begin position="25"/>
        <end position="297"/>
    </location>
</feature>
<feature type="active site" description="Proton acceptor" evidence="2">
    <location>
        <position position="65"/>
    </location>
</feature>
<feature type="active site" description="Proton donor" evidence="2">
    <location>
        <position position="152"/>
    </location>
</feature>
<feature type="active site" description="Nucleophile" evidence="2 3">
    <location>
        <position position="186"/>
    </location>
</feature>
<feature type="modified residue" description="N-acetylserine" evidence="1">
    <location>
        <position position="2"/>
    </location>
</feature>
<feature type="splice variant" id="VSP_059335" description="In isoform 2." evidence="8">
    <location>
        <begin position="1"/>
        <end position="6"/>
    </location>
</feature>
<feature type="sequence conflict" description="In Ref. 1; CAA45041." evidence="8" ref="1">
    <original>H</original>
    <variation>Y</variation>
    <location>
        <position position="312"/>
    </location>
</feature>
<feature type="initiator methionine" description="Removed" evidence="11">
    <location sequence="P32961-2">
        <position position="1"/>
    </location>
</feature>
<feature type="modified residue" description="N-acetylserine" evidence="11">
    <location sequence="P32961-2">
        <position position="2"/>
    </location>
</feature>
<dbReference type="EC" id="3.5.5.1" evidence="3"/>
<dbReference type="EMBL" id="X63445">
    <property type="protein sequence ID" value="CAA45041.1"/>
    <property type="molecule type" value="mRNA"/>
</dbReference>
<dbReference type="EMBL" id="U38845">
    <property type="protein sequence ID" value="AAB05221.1"/>
    <property type="molecule type" value="Genomic_DNA"/>
</dbReference>
<dbReference type="EMBL" id="Y07648">
    <property type="protein sequence ID" value="CAA68935.2"/>
    <property type="molecule type" value="Genomic_DNA"/>
</dbReference>
<dbReference type="EMBL" id="AL353865">
    <property type="protein sequence ID" value="CAB88999.1"/>
    <property type="molecule type" value="Genomic_DNA"/>
</dbReference>
<dbReference type="EMBL" id="CP002686">
    <property type="protein sequence ID" value="AEE77887.1"/>
    <property type="molecule type" value="Genomic_DNA"/>
</dbReference>
<dbReference type="EMBL" id="CP002686">
    <property type="protein sequence ID" value="AEE77889.1"/>
    <property type="molecule type" value="Genomic_DNA"/>
</dbReference>
<dbReference type="EMBL" id="AY042847">
    <property type="protein sequence ID" value="AAK68787.1"/>
    <property type="molecule type" value="mRNA"/>
</dbReference>
<dbReference type="EMBL" id="BT000040">
    <property type="protein sequence ID" value="AAN15359.1"/>
    <property type="molecule type" value="mRNA"/>
</dbReference>
<dbReference type="EMBL" id="DQ446730">
    <property type="protein sequence ID" value="ABE65989.1"/>
    <property type="molecule type" value="mRNA"/>
</dbReference>
<dbReference type="PIR" id="S22398">
    <property type="entry name" value="S22398"/>
</dbReference>
<dbReference type="PIR" id="T49147">
    <property type="entry name" value="T49147"/>
</dbReference>
<dbReference type="RefSeq" id="NP_001078234.1">
    <molecule id="P32961-1"/>
    <property type="nucleotide sequence ID" value="NM_001084765.1"/>
</dbReference>
<dbReference type="RefSeq" id="NP_851011.1">
    <molecule id="P32961-1"/>
    <property type="nucleotide sequence ID" value="NM_180680.3"/>
</dbReference>
<dbReference type="EMDB" id="EMD-3486"/>
<dbReference type="SMR" id="P32961"/>
<dbReference type="BioGRID" id="8876">
    <property type="interactions" value="3"/>
</dbReference>
<dbReference type="FunCoup" id="P32961">
    <property type="interactions" value="664"/>
</dbReference>
<dbReference type="IntAct" id="P32961">
    <property type="interactions" value="2"/>
</dbReference>
<dbReference type="MINT" id="P32961"/>
<dbReference type="STRING" id="3702.P32961"/>
<dbReference type="iPTMnet" id="P32961"/>
<dbReference type="MetOSite" id="P32961"/>
<dbReference type="PaxDb" id="3702-AT3G44310.1"/>
<dbReference type="ProteomicsDB" id="249394">
    <molecule id="P32961-1"/>
</dbReference>
<dbReference type="EnsemblPlants" id="AT3G44310.1">
    <molecule id="P32961-1"/>
    <property type="protein sequence ID" value="AT3G44310.1"/>
    <property type="gene ID" value="AT3G44310"/>
</dbReference>
<dbReference type="EnsemblPlants" id="AT3G44310.3">
    <molecule id="P32961-1"/>
    <property type="protein sequence ID" value="AT3G44310.3"/>
    <property type="gene ID" value="AT3G44310"/>
</dbReference>
<dbReference type="GeneID" id="823556"/>
<dbReference type="Gramene" id="AT3G44310.1">
    <molecule id="P32961-1"/>
    <property type="protein sequence ID" value="AT3G44310.1"/>
    <property type="gene ID" value="AT3G44310"/>
</dbReference>
<dbReference type="Gramene" id="AT3G44310.3">
    <molecule id="P32961-1"/>
    <property type="protein sequence ID" value="AT3G44310.3"/>
    <property type="gene ID" value="AT3G44310"/>
</dbReference>
<dbReference type="KEGG" id="ath:AT3G44310"/>
<dbReference type="Araport" id="AT3G44310"/>
<dbReference type="TAIR" id="AT3G44310">
    <property type="gene designation" value="NIT1"/>
</dbReference>
<dbReference type="eggNOG" id="KOG0805">
    <property type="taxonomic scope" value="Eukaryota"/>
</dbReference>
<dbReference type="InParanoid" id="P32961"/>
<dbReference type="OrthoDB" id="10250282at2759"/>
<dbReference type="PhylomeDB" id="P32961"/>
<dbReference type="BioCyc" id="ARA:AT3G44310-MONOMER"/>
<dbReference type="BioCyc" id="MetaCyc:AT3G44310-MONOMER"/>
<dbReference type="BRENDA" id="3.5.1.128">
    <property type="organism ID" value="399"/>
</dbReference>
<dbReference type="BRENDA" id="3.5.5.1">
    <property type="organism ID" value="399"/>
</dbReference>
<dbReference type="CD-CODE" id="4299E36E">
    <property type="entry name" value="Nucleolus"/>
</dbReference>
<dbReference type="PRO" id="PR:P32961"/>
<dbReference type="Proteomes" id="UP000006548">
    <property type="component" value="Chromosome 3"/>
</dbReference>
<dbReference type="ExpressionAtlas" id="P32961">
    <property type="expression patterns" value="baseline and differential"/>
</dbReference>
<dbReference type="GO" id="GO:0048046">
    <property type="term" value="C:apoplast"/>
    <property type="evidence" value="ECO:0007005"/>
    <property type="project" value="TAIR"/>
</dbReference>
<dbReference type="GO" id="GO:0009507">
    <property type="term" value="C:chloroplast"/>
    <property type="evidence" value="ECO:0007005"/>
    <property type="project" value="TAIR"/>
</dbReference>
<dbReference type="GO" id="GO:0005829">
    <property type="term" value="C:cytosol"/>
    <property type="evidence" value="ECO:0007005"/>
    <property type="project" value="TAIR"/>
</dbReference>
<dbReference type="GO" id="GO:0009506">
    <property type="term" value="C:plasmodesma"/>
    <property type="evidence" value="ECO:0007005"/>
    <property type="project" value="TAIR"/>
</dbReference>
<dbReference type="GO" id="GO:0080061">
    <property type="term" value="F:indole-3-acetonitrile nitrilase activity"/>
    <property type="evidence" value="ECO:0000314"/>
    <property type="project" value="TAIR"/>
</dbReference>
<dbReference type="GO" id="GO:0080109">
    <property type="term" value="F:indole-3-acetonitrile nitrile hydratase activity"/>
    <property type="evidence" value="ECO:0000314"/>
    <property type="project" value="TAIR"/>
</dbReference>
<dbReference type="GO" id="GO:0000257">
    <property type="term" value="F:nitrilase activity"/>
    <property type="evidence" value="ECO:0000314"/>
    <property type="project" value="TAIR"/>
</dbReference>
<dbReference type="GO" id="GO:0009684">
    <property type="term" value="P:indoleacetic acid biosynthetic process"/>
    <property type="evidence" value="ECO:0000304"/>
    <property type="project" value="TAIR"/>
</dbReference>
<dbReference type="CDD" id="cd07564">
    <property type="entry name" value="nitrilases_CHs"/>
    <property type="match status" value="1"/>
</dbReference>
<dbReference type="FunFam" id="3.60.110.10:FF:000006">
    <property type="entry name" value="Bifunctional nitrilase/nitrile hydratase NIT4B"/>
    <property type="match status" value="1"/>
</dbReference>
<dbReference type="Gene3D" id="3.60.110.10">
    <property type="entry name" value="Carbon-nitrogen hydrolase"/>
    <property type="match status" value="1"/>
</dbReference>
<dbReference type="InterPro" id="IPR003010">
    <property type="entry name" value="C-N_Hydrolase"/>
</dbReference>
<dbReference type="InterPro" id="IPR036526">
    <property type="entry name" value="C-N_Hydrolase_sf"/>
</dbReference>
<dbReference type="InterPro" id="IPR000132">
    <property type="entry name" value="Nitrilase/CN_hydratase_CS"/>
</dbReference>
<dbReference type="InterPro" id="IPR044149">
    <property type="entry name" value="Nitrilases_CHs"/>
</dbReference>
<dbReference type="PANTHER" id="PTHR46044">
    <property type="entry name" value="NITRILASE"/>
    <property type="match status" value="1"/>
</dbReference>
<dbReference type="PANTHER" id="PTHR46044:SF11">
    <property type="entry name" value="NITRILASE 1-RELATED"/>
    <property type="match status" value="1"/>
</dbReference>
<dbReference type="Pfam" id="PF00795">
    <property type="entry name" value="CN_hydrolase"/>
    <property type="match status" value="1"/>
</dbReference>
<dbReference type="SUPFAM" id="SSF56317">
    <property type="entry name" value="Carbon-nitrogen hydrolase"/>
    <property type="match status" value="1"/>
</dbReference>
<dbReference type="PROSITE" id="PS50263">
    <property type="entry name" value="CN_HYDROLASE"/>
    <property type="match status" value="1"/>
</dbReference>
<dbReference type="PROSITE" id="PS00920">
    <property type="entry name" value="NITRIL_CHT_1"/>
    <property type="match status" value="1"/>
</dbReference>
<dbReference type="PROSITE" id="PS00921">
    <property type="entry name" value="NITRIL_CHT_2"/>
    <property type="match status" value="1"/>
</dbReference>